<gene>
    <name evidence="1" type="primary">ribH</name>
    <name type="ordered locus">MAB_2795c</name>
</gene>
<reference key="1">
    <citation type="journal article" date="2009" name="PLoS ONE">
        <title>Non mycobacterial virulence genes in the genome of the emerging pathogen Mycobacterium abscessus.</title>
        <authorList>
            <person name="Ripoll F."/>
            <person name="Pasek S."/>
            <person name="Schenowitz C."/>
            <person name="Dossat C."/>
            <person name="Barbe V."/>
            <person name="Rottman M."/>
            <person name="Macheras E."/>
            <person name="Heym B."/>
            <person name="Herrmann J.L."/>
            <person name="Daffe M."/>
            <person name="Brosch R."/>
            <person name="Risler J.L."/>
            <person name="Gaillard J.L."/>
        </authorList>
    </citation>
    <scope>NUCLEOTIDE SEQUENCE [LARGE SCALE GENOMIC DNA]</scope>
    <source>
        <strain>ATCC 19977 / DSM 44196 / CCUG 20993 / CIP 104536 / JCM 13569 / NCTC 13031 / TMC 1543 / L948</strain>
    </source>
</reference>
<feature type="chain" id="PRO_1000098207" description="6,7-dimethyl-8-ribityllumazine synthase">
    <location>
        <begin position="1"/>
        <end position="160"/>
    </location>
</feature>
<feature type="active site" description="Proton donor" evidence="1">
    <location>
        <position position="88"/>
    </location>
</feature>
<feature type="binding site" evidence="1">
    <location>
        <position position="26"/>
    </location>
    <ligand>
        <name>5-amino-6-(D-ribitylamino)uracil</name>
        <dbReference type="ChEBI" id="CHEBI:15934"/>
    </ligand>
</feature>
<feature type="binding site" evidence="1">
    <location>
        <begin position="58"/>
        <end position="60"/>
    </location>
    <ligand>
        <name>5-amino-6-(D-ribitylamino)uracil</name>
        <dbReference type="ChEBI" id="CHEBI:15934"/>
    </ligand>
</feature>
<feature type="binding site" evidence="1">
    <location>
        <begin position="80"/>
        <end position="82"/>
    </location>
    <ligand>
        <name>5-amino-6-(D-ribitylamino)uracil</name>
        <dbReference type="ChEBI" id="CHEBI:15934"/>
    </ligand>
</feature>
<feature type="binding site" evidence="1">
    <location>
        <begin position="85"/>
        <end position="86"/>
    </location>
    <ligand>
        <name>(2S)-2-hydroxy-3-oxobutyl phosphate</name>
        <dbReference type="ChEBI" id="CHEBI:58830"/>
    </ligand>
</feature>
<feature type="binding site" evidence="1">
    <location>
        <position position="113"/>
    </location>
    <ligand>
        <name>5-amino-6-(D-ribitylamino)uracil</name>
        <dbReference type="ChEBI" id="CHEBI:15934"/>
    </ligand>
</feature>
<feature type="binding site" evidence="1">
    <location>
        <position position="127"/>
    </location>
    <ligand>
        <name>(2S)-2-hydroxy-3-oxobutyl phosphate</name>
        <dbReference type="ChEBI" id="CHEBI:58830"/>
    </ligand>
</feature>
<evidence type="ECO:0000255" key="1">
    <source>
        <dbReference type="HAMAP-Rule" id="MF_00178"/>
    </source>
</evidence>
<name>RISB_MYCA9</name>
<comment type="function">
    <text evidence="1">Catalyzes the formation of 6,7-dimethyl-8-ribityllumazine by condensation of 5-amino-6-(D-ribitylamino)uracil with 3,4-dihydroxy-2-butanone 4-phosphate. This is the penultimate step in the biosynthesis of riboflavin.</text>
</comment>
<comment type="catalytic activity">
    <reaction evidence="1">
        <text>(2S)-2-hydroxy-3-oxobutyl phosphate + 5-amino-6-(D-ribitylamino)uracil = 6,7-dimethyl-8-(1-D-ribityl)lumazine + phosphate + 2 H2O + H(+)</text>
        <dbReference type="Rhea" id="RHEA:26152"/>
        <dbReference type="ChEBI" id="CHEBI:15377"/>
        <dbReference type="ChEBI" id="CHEBI:15378"/>
        <dbReference type="ChEBI" id="CHEBI:15934"/>
        <dbReference type="ChEBI" id="CHEBI:43474"/>
        <dbReference type="ChEBI" id="CHEBI:58201"/>
        <dbReference type="ChEBI" id="CHEBI:58830"/>
        <dbReference type="EC" id="2.5.1.78"/>
    </reaction>
</comment>
<comment type="pathway">
    <text evidence="1">Cofactor biosynthesis; riboflavin biosynthesis; riboflavin from 2-hydroxy-3-oxobutyl phosphate and 5-amino-6-(D-ribitylamino)uracil: step 1/2.</text>
</comment>
<comment type="subunit">
    <text evidence="1">Homopentamer.</text>
</comment>
<comment type="similarity">
    <text evidence="1">Belongs to the DMRL synthase family.</text>
</comment>
<dbReference type="EC" id="2.5.1.78" evidence="1"/>
<dbReference type="EMBL" id="CU458896">
    <property type="protein sequence ID" value="CAM62874.1"/>
    <property type="molecule type" value="Genomic_DNA"/>
</dbReference>
<dbReference type="RefSeq" id="WP_005082317.1">
    <property type="nucleotide sequence ID" value="NZ_MLCG01000003.1"/>
</dbReference>
<dbReference type="SMR" id="B1MCA3"/>
<dbReference type="GeneID" id="93379726"/>
<dbReference type="KEGG" id="mab:MAB_2795c"/>
<dbReference type="UniPathway" id="UPA00275">
    <property type="reaction ID" value="UER00404"/>
</dbReference>
<dbReference type="Proteomes" id="UP000007137">
    <property type="component" value="Chromosome"/>
</dbReference>
<dbReference type="GO" id="GO:0005829">
    <property type="term" value="C:cytosol"/>
    <property type="evidence" value="ECO:0007669"/>
    <property type="project" value="TreeGrafter"/>
</dbReference>
<dbReference type="GO" id="GO:0009349">
    <property type="term" value="C:riboflavin synthase complex"/>
    <property type="evidence" value="ECO:0007669"/>
    <property type="project" value="InterPro"/>
</dbReference>
<dbReference type="GO" id="GO:0000906">
    <property type="term" value="F:6,7-dimethyl-8-ribityllumazine synthase activity"/>
    <property type="evidence" value="ECO:0007669"/>
    <property type="project" value="UniProtKB-UniRule"/>
</dbReference>
<dbReference type="GO" id="GO:0009231">
    <property type="term" value="P:riboflavin biosynthetic process"/>
    <property type="evidence" value="ECO:0007669"/>
    <property type="project" value="UniProtKB-UniRule"/>
</dbReference>
<dbReference type="CDD" id="cd09209">
    <property type="entry name" value="Lumazine_synthase-I"/>
    <property type="match status" value="1"/>
</dbReference>
<dbReference type="Gene3D" id="3.40.50.960">
    <property type="entry name" value="Lumazine/riboflavin synthase"/>
    <property type="match status" value="1"/>
</dbReference>
<dbReference type="HAMAP" id="MF_00178">
    <property type="entry name" value="Lumazine_synth"/>
    <property type="match status" value="1"/>
</dbReference>
<dbReference type="InterPro" id="IPR034964">
    <property type="entry name" value="LS"/>
</dbReference>
<dbReference type="InterPro" id="IPR002180">
    <property type="entry name" value="LS/RS"/>
</dbReference>
<dbReference type="InterPro" id="IPR036467">
    <property type="entry name" value="LS/RS_sf"/>
</dbReference>
<dbReference type="NCBIfam" id="TIGR00114">
    <property type="entry name" value="lumazine-synth"/>
    <property type="match status" value="1"/>
</dbReference>
<dbReference type="PANTHER" id="PTHR21058:SF0">
    <property type="entry name" value="6,7-DIMETHYL-8-RIBITYLLUMAZINE SYNTHASE"/>
    <property type="match status" value="1"/>
</dbReference>
<dbReference type="PANTHER" id="PTHR21058">
    <property type="entry name" value="6,7-DIMETHYL-8-RIBITYLLUMAZINE SYNTHASE DMRL SYNTHASE LUMAZINE SYNTHASE"/>
    <property type="match status" value="1"/>
</dbReference>
<dbReference type="Pfam" id="PF00885">
    <property type="entry name" value="DMRL_synthase"/>
    <property type="match status" value="1"/>
</dbReference>
<dbReference type="SUPFAM" id="SSF52121">
    <property type="entry name" value="Lumazine synthase"/>
    <property type="match status" value="1"/>
</dbReference>
<protein>
    <recommendedName>
        <fullName evidence="1">6,7-dimethyl-8-ribityllumazine synthase</fullName>
        <shortName evidence="1">DMRL synthase</shortName>
        <shortName evidence="1">LS</shortName>
        <shortName evidence="1">Lumazine synthase</shortName>
        <ecNumber evidence="1">2.5.1.78</ecNumber>
    </recommendedName>
</protein>
<accession>B1MCA3</accession>
<keyword id="KW-1185">Reference proteome</keyword>
<keyword id="KW-0686">Riboflavin biosynthesis</keyword>
<keyword id="KW-0808">Transferase</keyword>
<sequence>MSGDGIPSLSVGDASGISLAIVASTWHDQICTALLEGAQRVATEAGIDRPTVVRVLGAIEIPVVAQALARTHDAVVALGVVIQGETPHFGYVCDAVTTGLTRVSLDTSTPVANGVLTVNNEQQAIDRAGLPGSAEDKGAQAAAAALDTALTLRRLRQPWA</sequence>
<organism>
    <name type="scientific">Mycobacteroides abscessus (strain ATCC 19977 / DSM 44196 / CCUG 20993 / CIP 104536 / JCM 13569 / NCTC 13031 / TMC 1543 / L948)</name>
    <name type="common">Mycobacterium abscessus</name>
    <dbReference type="NCBI Taxonomy" id="561007"/>
    <lineage>
        <taxon>Bacteria</taxon>
        <taxon>Bacillati</taxon>
        <taxon>Actinomycetota</taxon>
        <taxon>Actinomycetes</taxon>
        <taxon>Mycobacteriales</taxon>
        <taxon>Mycobacteriaceae</taxon>
        <taxon>Mycobacteroides</taxon>
        <taxon>Mycobacteroides abscessus</taxon>
    </lineage>
</organism>
<proteinExistence type="inferred from homology"/>